<gene>
    <name evidence="1" type="primary">dtd</name>
    <name type="ordered locus">APJL_1996</name>
</gene>
<feature type="chain" id="PRO_1000127485" description="D-aminoacyl-tRNA deacylase">
    <location>
        <begin position="1"/>
        <end position="144"/>
    </location>
</feature>
<feature type="short sequence motif" description="Gly-cisPro motif, important for rejection of L-amino acids" evidence="1">
    <location>
        <begin position="136"/>
        <end position="137"/>
    </location>
</feature>
<organism>
    <name type="scientific">Actinobacillus pleuropneumoniae serotype 3 (strain JL03)</name>
    <dbReference type="NCBI Taxonomy" id="434271"/>
    <lineage>
        <taxon>Bacteria</taxon>
        <taxon>Pseudomonadati</taxon>
        <taxon>Pseudomonadota</taxon>
        <taxon>Gammaproteobacteria</taxon>
        <taxon>Pasteurellales</taxon>
        <taxon>Pasteurellaceae</taxon>
        <taxon>Actinobacillus</taxon>
    </lineage>
</organism>
<accession>B0BTX7</accession>
<comment type="function">
    <text evidence="1">An aminoacyl-tRNA editing enzyme that deacylates mischarged D-aminoacyl-tRNAs. Also deacylates mischarged glycyl-tRNA(Ala), protecting cells against glycine mischarging by AlaRS. Acts via tRNA-based rather than protein-based catalysis; rejects L-amino acids rather than detecting D-amino acids in the active site. By recycling D-aminoacyl-tRNA to D-amino acids and free tRNA molecules, this enzyme counteracts the toxicity associated with the formation of D-aminoacyl-tRNA entities in vivo and helps enforce protein L-homochirality.</text>
</comment>
<comment type="catalytic activity">
    <reaction evidence="1">
        <text>glycyl-tRNA(Ala) + H2O = tRNA(Ala) + glycine + H(+)</text>
        <dbReference type="Rhea" id="RHEA:53744"/>
        <dbReference type="Rhea" id="RHEA-COMP:9657"/>
        <dbReference type="Rhea" id="RHEA-COMP:13640"/>
        <dbReference type="ChEBI" id="CHEBI:15377"/>
        <dbReference type="ChEBI" id="CHEBI:15378"/>
        <dbReference type="ChEBI" id="CHEBI:57305"/>
        <dbReference type="ChEBI" id="CHEBI:78442"/>
        <dbReference type="ChEBI" id="CHEBI:78522"/>
        <dbReference type="EC" id="3.1.1.96"/>
    </reaction>
</comment>
<comment type="catalytic activity">
    <reaction evidence="1">
        <text>a D-aminoacyl-tRNA + H2O = a tRNA + a D-alpha-amino acid + H(+)</text>
        <dbReference type="Rhea" id="RHEA:13953"/>
        <dbReference type="Rhea" id="RHEA-COMP:10123"/>
        <dbReference type="Rhea" id="RHEA-COMP:10124"/>
        <dbReference type="ChEBI" id="CHEBI:15377"/>
        <dbReference type="ChEBI" id="CHEBI:15378"/>
        <dbReference type="ChEBI" id="CHEBI:59871"/>
        <dbReference type="ChEBI" id="CHEBI:78442"/>
        <dbReference type="ChEBI" id="CHEBI:79333"/>
        <dbReference type="EC" id="3.1.1.96"/>
    </reaction>
</comment>
<comment type="subunit">
    <text evidence="1">Homodimer.</text>
</comment>
<comment type="subcellular location">
    <subcellularLocation>
        <location evidence="1">Cytoplasm</location>
    </subcellularLocation>
</comment>
<comment type="domain">
    <text evidence="1">A Gly-cisPro motif from one monomer fits into the active site of the other monomer to allow specific chiral rejection of L-amino acids.</text>
</comment>
<comment type="similarity">
    <text evidence="1">Belongs to the DTD family.</text>
</comment>
<keyword id="KW-0963">Cytoplasm</keyword>
<keyword id="KW-0378">Hydrolase</keyword>
<keyword id="KW-0694">RNA-binding</keyword>
<keyword id="KW-0820">tRNA-binding</keyword>
<name>DTD_ACTPJ</name>
<proteinExistence type="inferred from homology"/>
<dbReference type="EC" id="3.1.1.96" evidence="1"/>
<dbReference type="EMBL" id="CP000687">
    <property type="protein sequence ID" value="ABY70544.1"/>
    <property type="molecule type" value="Genomic_DNA"/>
</dbReference>
<dbReference type="RefSeq" id="WP_005602846.1">
    <property type="nucleotide sequence ID" value="NC_010278.1"/>
</dbReference>
<dbReference type="SMR" id="B0BTX7"/>
<dbReference type="KEGG" id="apj:APJL_1996"/>
<dbReference type="HOGENOM" id="CLU_076901_1_1_6"/>
<dbReference type="Proteomes" id="UP000008547">
    <property type="component" value="Chromosome"/>
</dbReference>
<dbReference type="GO" id="GO:0005737">
    <property type="term" value="C:cytoplasm"/>
    <property type="evidence" value="ECO:0007669"/>
    <property type="project" value="UniProtKB-SubCell"/>
</dbReference>
<dbReference type="GO" id="GO:0051500">
    <property type="term" value="F:D-tyrosyl-tRNA(Tyr) deacylase activity"/>
    <property type="evidence" value="ECO:0007669"/>
    <property type="project" value="TreeGrafter"/>
</dbReference>
<dbReference type="GO" id="GO:0106026">
    <property type="term" value="F:Gly-tRNA(Ala) deacylase activity"/>
    <property type="evidence" value="ECO:0007669"/>
    <property type="project" value="UniProtKB-UniRule"/>
</dbReference>
<dbReference type="GO" id="GO:0043908">
    <property type="term" value="F:Ser(Gly)-tRNA(Ala) hydrolase activity"/>
    <property type="evidence" value="ECO:0007669"/>
    <property type="project" value="UniProtKB-UniRule"/>
</dbReference>
<dbReference type="GO" id="GO:0000049">
    <property type="term" value="F:tRNA binding"/>
    <property type="evidence" value="ECO:0007669"/>
    <property type="project" value="UniProtKB-UniRule"/>
</dbReference>
<dbReference type="GO" id="GO:0019478">
    <property type="term" value="P:D-amino acid catabolic process"/>
    <property type="evidence" value="ECO:0007669"/>
    <property type="project" value="UniProtKB-UniRule"/>
</dbReference>
<dbReference type="CDD" id="cd00563">
    <property type="entry name" value="Dtyr_deacylase"/>
    <property type="match status" value="1"/>
</dbReference>
<dbReference type="FunFam" id="3.50.80.10:FF:000001">
    <property type="entry name" value="D-aminoacyl-tRNA deacylase"/>
    <property type="match status" value="1"/>
</dbReference>
<dbReference type="Gene3D" id="3.50.80.10">
    <property type="entry name" value="D-tyrosyl-tRNA(Tyr) deacylase"/>
    <property type="match status" value="1"/>
</dbReference>
<dbReference type="HAMAP" id="MF_00518">
    <property type="entry name" value="Deacylase_Dtd"/>
    <property type="match status" value="1"/>
</dbReference>
<dbReference type="InterPro" id="IPR003732">
    <property type="entry name" value="Daa-tRNA_deacyls_DTD"/>
</dbReference>
<dbReference type="InterPro" id="IPR023509">
    <property type="entry name" value="DTD-like_sf"/>
</dbReference>
<dbReference type="NCBIfam" id="TIGR00256">
    <property type="entry name" value="D-aminoacyl-tRNA deacylase"/>
    <property type="match status" value="1"/>
</dbReference>
<dbReference type="PANTHER" id="PTHR10472:SF5">
    <property type="entry name" value="D-AMINOACYL-TRNA DEACYLASE 1"/>
    <property type="match status" value="1"/>
</dbReference>
<dbReference type="PANTHER" id="PTHR10472">
    <property type="entry name" value="D-TYROSYL-TRNA TYR DEACYLASE"/>
    <property type="match status" value="1"/>
</dbReference>
<dbReference type="Pfam" id="PF02580">
    <property type="entry name" value="Tyr_Deacylase"/>
    <property type="match status" value="1"/>
</dbReference>
<dbReference type="SUPFAM" id="SSF69500">
    <property type="entry name" value="DTD-like"/>
    <property type="match status" value="1"/>
</dbReference>
<sequence>MIGLIQRVKWAKVEVEGQTVGEITQGLLVLLGVEQGDDQAKADKLLEKVLNYRVFSDEQGKMNLNVQQAGGSLLVVSQFTLAADTNKGLRPSFSRGAAPQEANALYEYFHQQAARKIHTQTGQFAADMQVSLQNDGPVTFWLQI</sequence>
<reference key="1">
    <citation type="journal article" date="2008" name="PLoS ONE">
        <title>Genome biology of Actinobacillus pleuropneumoniae JL03, an isolate of serotype 3 prevalent in China.</title>
        <authorList>
            <person name="Xu Z."/>
            <person name="Zhou Y."/>
            <person name="Li L."/>
            <person name="Zhou R."/>
            <person name="Xiao S."/>
            <person name="Wan Y."/>
            <person name="Zhang S."/>
            <person name="Wang K."/>
            <person name="Li W."/>
            <person name="Li L."/>
            <person name="Jin H."/>
            <person name="Kang M."/>
            <person name="Dalai B."/>
            <person name="Li T."/>
            <person name="Liu L."/>
            <person name="Cheng Y."/>
            <person name="Zhang L."/>
            <person name="Xu T."/>
            <person name="Zheng H."/>
            <person name="Pu S."/>
            <person name="Wang B."/>
            <person name="Gu W."/>
            <person name="Zhang X.L."/>
            <person name="Zhu G.-F."/>
            <person name="Wang S."/>
            <person name="Zhao G.-P."/>
            <person name="Chen H."/>
        </authorList>
    </citation>
    <scope>NUCLEOTIDE SEQUENCE [LARGE SCALE GENOMIC DNA]</scope>
    <source>
        <strain>JL03</strain>
    </source>
</reference>
<evidence type="ECO:0000255" key="1">
    <source>
        <dbReference type="HAMAP-Rule" id="MF_00518"/>
    </source>
</evidence>
<protein>
    <recommendedName>
        <fullName evidence="1">D-aminoacyl-tRNA deacylase</fullName>
        <shortName evidence="1">DTD</shortName>
        <ecNumber evidence="1">3.1.1.96</ecNumber>
    </recommendedName>
    <alternativeName>
        <fullName evidence="1">Gly-tRNA(Ala) deacylase</fullName>
    </alternativeName>
</protein>